<keyword id="KW-0150">Chloroplast</keyword>
<keyword id="KW-0472">Membrane</keyword>
<keyword id="KW-0934">Plastid</keyword>
<keyword id="KW-1001">Plastid inner membrane</keyword>
<keyword id="KW-0653">Protein transport</keyword>
<keyword id="KW-1185">Reference proteome</keyword>
<keyword id="KW-0809">Transit peptide</keyword>
<keyword id="KW-0812">Transmembrane</keyword>
<keyword id="KW-1133">Transmembrane helix</keyword>
<keyword id="KW-0813">Transport</keyword>
<gene>
    <name type="primary">TIC20-II</name>
    <name type="ordered locus">At2g47840</name>
    <name type="ORF">F17A22.23</name>
</gene>
<reference key="1">
    <citation type="journal article" date="1999" name="Nature">
        <title>Sequence and analysis of chromosome 2 of the plant Arabidopsis thaliana.</title>
        <authorList>
            <person name="Lin X."/>
            <person name="Kaul S."/>
            <person name="Rounsley S.D."/>
            <person name="Shea T.P."/>
            <person name="Benito M.-I."/>
            <person name="Town C.D."/>
            <person name="Fujii C.Y."/>
            <person name="Mason T.M."/>
            <person name="Bowman C.L."/>
            <person name="Barnstead M.E."/>
            <person name="Feldblyum T.V."/>
            <person name="Buell C.R."/>
            <person name="Ketchum K.A."/>
            <person name="Lee J.J."/>
            <person name="Ronning C.M."/>
            <person name="Koo H.L."/>
            <person name="Moffat K.S."/>
            <person name="Cronin L.A."/>
            <person name="Shen M."/>
            <person name="Pai G."/>
            <person name="Van Aken S."/>
            <person name="Umayam L."/>
            <person name="Tallon L.J."/>
            <person name="Gill J.E."/>
            <person name="Adams M.D."/>
            <person name="Carrera A.J."/>
            <person name="Creasy T.H."/>
            <person name="Goodman H.M."/>
            <person name="Somerville C.R."/>
            <person name="Copenhaver G.P."/>
            <person name="Preuss D."/>
            <person name="Nierman W.C."/>
            <person name="White O."/>
            <person name="Eisen J.A."/>
            <person name="Salzberg S.L."/>
            <person name="Fraser C.M."/>
            <person name="Venter J.C."/>
        </authorList>
    </citation>
    <scope>NUCLEOTIDE SEQUENCE [LARGE SCALE GENOMIC DNA]</scope>
    <source>
        <strain>cv. Columbia</strain>
    </source>
</reference>
<reference key="2">
    <citation type="journal article" date="2017" name="Plant J.">
        <title>Araport11: a complete reannotation of the Arabidopsis thaliana reference genome.</title>
        <authorList>
            <person name="Cheng C.Y."/>
            <person name="Krishnakumar V."/>
            <person name="Chan A.P."/>
            <person name="Thibaud-Nissen F."/>
            <person name="Schobel S."/>
            <person name="Town C.D."/>
        </authorList>
    </citation>
    <scope>GENOME REANNOTATION</scope>
    <source>
        <strain>cv. Columbia</strain>
    </source>
</reference>
<reference key="3">
    <citation type="journal article" date="2003" name="Science">
        <title>Empirical analysis of transcriptional activity in the Arabidopsis genome.</title>
        <authorList>
            <person name="Yamada K."/>
            <person name="Lim J."/>
            <person name="Dale J.M."/>
            <person name="Chen H."/>
            <person name="Shinn P."/>
            <person name="Palm C.J."/>
            <person name="Southwick A.M."/>
            <person name="Wu H.C."/>
            <person name="Kim C.J."/>
            <person name="Nguyen M."/>
            <person name="Pham P.K."/>
            <person name="Cheuk R.F."/>
            <person name="Karlin-Newmann G."/>
            <person name="Liu S.X."/>
            <person name="Lam B."/>
            <person name="Sakano H."/>
            <person name="Wu T."/>
            <person name="Yu G."/>
            <person name="Miranda M."/>
            <person name="Quach H.L."/>
            <person name="Tripp M."/>
            <person name="Chang C.H."/>
            <person name="Lee J.M."/>
            <person name="Toriumi M.J."/>
            <person name="Chan M.M."/>
            <person name="Tang C.C."/>
            <person name="Onodera C.S."/>
            <person name="Deng J.M."/>
            <person name="Akiyama K."/>
            <person name="Ansari Y."/>
            <person name="Arakawa T."/>
            <person name="Banh J."/>
            <person name="Banno F."/>
            <person name="Bowser L."/>
            <person name="Brooks S.Y."/>
            <person name="Carninci P."/>
            <person name="Chao Q."/>
            <person name="Choy N."/>
            <person name="Enju A."/>
            <person name="Goldsmith A.D."/>
            <person name="Gurjal M."/>
            <person name="Hansen N.F."/>
            <person name="Hayashizaki Y."/>
            <person name="Johnson-Hopson C."/>
            <person name="Hsuan V.W."/>
            <person name="Iida K."/>
            <person name="Karnes M."/>
            <person name="Khan S."/>
            <person name="Koesema E."/>
            <person name="Ishida J."/>
            <person name="Jiang P.X."/>
            <person name="Jones T."/>
            <person name="Kawai J."/>
            <person name="Kamiya A."/>
            <person name="Meyers C."/>
            <person name="Nakajima M."/>
            <person name="Narusaka M."/>
            <person name="Seki M."/>
            <person name="Sakurai T."/>
            <person name="Satou M."/>
            <person name="Tamse R."/>
            <person name="Vaysberg M."/>
            <person name="Wallender E.K."/>
            <person name="Wong C."/>
            <person name="Yamamura Y."/>
            <person name="Yuan S."/>
            <person name="Shinozaki K."/>
            <person name="Davis R.W."/>
            <person name="Theologis A."/>
            <person name="Ecker J.R."/>
        </authorList>
    </citation>
    <scope>NUCLEOTIDE SEQUENCE [LARGE SCALE MRNA]</scope>
    <source>
        <strain>cv. Columbia</strain>
    </source>
</reference>
<reference key="4">
    <citation type="journal article" date="2011" name="Plant J.">
        <title>Molecular and genetic analyses of Tic20 homologues in Arabidopsis thaliana chloroplasts.</title>
        <authorList>
            <person name="Kasmati A.R."/>
            <person name="Toepel M."/>
            <person name="Patel R."/>
            <person name="Murtaza G."/>
            <person name="Jarvis P."/>
        </authorList>
    </citation>
    <scope>SUBCELLULAR LOCATION</scope>
    <scope>TISSUE SPECIFICITY</scope>
    <scope>DEVELOPMENTAL STAGE</scope>
    <scope>DISRUPTION PHENOTYPE</scope>
</reference>
<reference key="5">
    <citation type="journal article" date="2010" name="Biochim. Biophys. Acta">
        <title>Protein import into chloroplasts: the Tic complex and its regulation.</title>
        <authorList>
            <person name="Kovacs-Bogdan E."/>
            <person name="Soll J."/>
            <person name="Bolter B."/>
        </authorList>
    </citation>
    <scope>REVIEW</scope>
</reference>
<feature type="transit peptide" description="Chloroplast" evidence="2">
    <location>
        <begin position="1"/>
        <end position="49"/>
    </location>
</feature>
<feature type="chain" id="PRO_0000413664" description="Protein TIC 20-II, chloroplastic">
    <location>
        <begin position="50"/>
        <end position="208"/>
    </location>
</feature>
<feature type="transmembrane region" description="Helical" evidence="2">
    <location>
        <begin position="61"/>
        <end position="83"/>
    </location>
</feature>
<feature type="transmembrane region" description="Helical" evidence="2">
    <location>
        <begin position="101"/>
        <end position="121"/>
    </location>
</feature>
<feature type="transmembrane region" description="Helical" evidence="2">
    <location>
        <begin position="134"/>
        <end position="154"/>
    </location>
</feature>
<feature type="transmembrane region" description="Helical" evidence="2">
    <location>
        <begin position="172"/>
        <end position="192"/>
    </location>
</feature>
<feature type="sequence conflict" description="In Ref. 3; AAK91363/AAM16201." evidence="4" ref="3">
    <original>I</original>
    <variation>T</variation>
    <location>
        <position position="36"/>
    </location>
</feature>
<dbReference type="EMBL" id="AC005309">
    <property type="protein sequence ID" value="AAC63638.1"/>
    <property type="molecule type" value="Genomic_DNA"/>
</dbReference>
<dbReference type="EMBL" id="CP002685">
    <property type="protein sequence ID" value="AEC10895.1"/>
    <property type="molecule type" value="Genomic_DNA"/>
</dbReference>
<dbReference type="EMBL" id="AY050346">
    <property type="protein sequence ID" value="AAK91363.1"/>
    <property type="molecule type" value="mRNA"/>
</dbReference>
<dbReference type="EMBL" id="AY094045">
    <property type="protein sequence ID" value="AAM16201.1"/>
    <property type="molecule type" value="mRNA"/>
</dbReference>
<dbReference type="PIR" id="B84920">
    <property type="entry name" value="B84920"/>
</dbReference>
<dbReference type="RefSeq" id="NP_566112.1">
    <property type="nucleotide sequence ID" value="NM_130351.3"/>
</dbReference>
<dbReference type="SMR" id="O82251"/>
<dbReference type="BioGRID" id="4731">
    <property type="interactions" value="2"/>
</dbReference>
<dbReference type="FunCoup" id="O82251">
    <property type="interactions" value="87"/>
</dbReference>
<dbReference type="IntAct" id="O82251">
    <property type="interactions" value="2"/>
</dbReference>
<dbReference type="STRING" id="3702.O82251"/>
<dbReference type="GlyGen" id="O82251">
    <property type="glycosylation" value="1 site"/>
</dbReference>
<dbReference type="PaxDb" id="3702-AT2G47840.1"/>
<dbReference type="ProteomicsDB" id="246486"/>
<dbReference type="EnsemblPlants" id="AT2G47840.1">
    <property type="protein sequence ID" value="AT2G47840.1"/>
    <property type="gene ID" value="AT2G47840"/>
</dbReference>
<dbReference type="GeneID" id="819396"/>
<dbReference type="Gramene" id="AT2G47840.1">
    <property type="protein sequence ID" value="AT2G47840.1"/>
    <property type="gene ID" value="AT2G47840"/>
</dbReference>
<dbReference type="KEGG" id="ath:AT2G47840"/>
<dbReference type="Araport" id="AT2G47840"/>
<dbReference type="TAIR" id="AT2G47840">
    <property type="gene designation" value="TIC20-II"/>
</dbReference>
<dbReference type="eggNOG" id="ENOG502QUSD">
    <property type="taxonomic scope" value="Eukaryota"/>
</dbReference>
<dbReference type="HOGENOM" id="CLU_094758_0_0_1"/>
<dbReference type="InParanoid" id="O82251"/>
<dbReference type="OMA" id="KLMVWGH"/>
<dbReference type="OrthoDB" id="414558at2759"/>
<dbReference type="PhylomeDB" id="O82251"/>
<dbReference type="PRO" id="PR:O82251"/>
<dbReference type="Proteomes" id="UP000006548">
    <property type="component" value="Chromosome 2"/>
</dbReference>
<dbReference type="ExpressionAtlas" id="O82251">
    <property type="expression patterns" value="baseline and differential"/>
</dbReference>
<dbReference type="GO" id="GO:0009507">
    <property type="term" value="C:chloroplast"/>
    <property type="evidence" value="ECO:0007005"/>
    <property type="project" value="TAIR"/>
</dbReference>
<dbReference type="GO" id="GO:0009941">
    <property type="term" value="C:chloroplast envelope"/>
    <property type="evidence" value="ECO:0007005"/>
    <property type="project" value="TAIR"/>
</dbReference>
<dbReference type="GO" id="GO:0009706">
    <property type="term" value="C:chloroplast inner membrane"/>
    <property type="evidence" value="ECO:0000314"/>
    <property type="project" value="TAIR"/>
</dbReference>
<dbReference type="GO" id="GO:0005829">
    <property type="term" value="C:cytosol"/>
    <property type="evidence" value="ECO:0007005"/>
    <property type="project" value="TAIR"/>
</dbReference>
<dbReference type="GO" id="GO:0009536">
    <property type="term" value="C:plastid"/>
    <property type="evidence" value="ECO:0007005"/>
    <property type="project" value="TAIR"/>
</dbReference>
<dbReference type="GO" id="GO:0015031">
    <property type="term" value="P:protein transport"/>
    <property type="evidence" value="ECO:0007669"/>
    <property type="project" value="UniProtKB-KW"/>
</dbReference>
<dbReference type="InterPro" id="IPR005691">
    <property type="entry name" value="Tic20"/>
</dbReference>
<dbReference type="PANTHER" id="PTHR33510">
    <property type="entry name" value="PROTEIN TIC 20-II, CHLOROPLASTIC"/>
    <property type="match status" value="1"/>
</dbReference>
<dbReference type="PANTHER" id="PTHR33510:SF5">
    <property type="entry name" value="PROTEIN TIC 20-II, CHLOROPLASTIC"/>
    <property type="match status" value="1"/>
</dbReference>
<dbReference type="Pfam" id="PF16166">
    <property type="entry name" value="TIC20"/>
    <property type="match status" value="1"/>
</dbReference>
<evidence type="ECO:0000250" key="1"/>
<evidence type="ECO:0000255" key="2"/>
<evidence type="ECO:0000269" key="3">
    <source>
    </source>
</evidence>
<evidence type="ECO:0000305" key="4"/>
<proteinExistence type="evidence at transcript level"/>
<accession>O82251</accession>
<accession>Q94A61</accession>
<comment type="function">
    <text>May be involved in protein precursor import into chloroplasts. Not redundant with TIC20-I, TIC20-IV or TIC20-V.</text>
</comment>
<comment type="subunit">
    <text evidence="1">Part of the Tic complex.</text>
</comment>
<comment type="subcellular location">
    <subcellularLocation>
        <location evidence="3">Plastid</location>
        <location evidence="3">Chloroplast inner membrane</location>
        <topology evidence="3">Multi-pass membrane protein</topology>
    </subcellularLocation>
</comment>
<comment type="tissue specificity">
    <text evidence="3">Expressed in leaves, siliques and roots.</text>
</comment>
<comment type="developmental stage">
    <text evidence="3">Expressed throughout development.</text>
</comment>
<comment type="disruption phenotype">
    <text evidence="3">No visible phenotype.</text>
</comment>
<comment type="similarity">
    <text evidence="4">Belongs to the Tic20 family.</text>
</comment>
<protein>
    <recommendedName>
        <fullName>Protein TIC 20-II, chloroplastic</fullName>
    </recommendedName>
    <alternativeName>
        <fullName>Translocon at the inner envelope membrane of chloroplasts 20-II</fullName>
        <shortName>AtTIC20-II</shortName>
    </alternativeName>
</protein>
<name>TI202_ARATH</name>
<organism>
    <name type="scientific">Arabidopsis thaliana</name>
    <name type="common">Mouse-ear cress</name>
    <dbReference type="NCBI Taxonomy" id="3702"/>
    <lineage>
        <taxon>Eukaryota</taxon>
        <taxon>Viridiplantae</taxon>
        <taxon>Streptophyta</taxon>
        <taxon>Embryophyta</taxon>
        <taxon>Tracheophyta</taxon>
        <taxon>Spermatophyta</taxon>
        <taxon>Magnoliopsida</taxon>
        <taxon>eudicotyledons</taxon>
        <taxon>Gunneridae</taxon>
        <taxon>Pentapetalae</taxon>
        <taxon>rosids</taxon>
        <taxon>malvids</taxon>
        <taxon>Brassicales</taxon>
        <taxon>Brassicaceae</taxon>
        <taxon>Camelineae</taxon>
        <taxon>Arabidopsis</taxon>
    </lineage>
</organism>
<sequence>MASLCLSLHQTLTNPLSAPRCRPLSLSFPGSSTFSIRPSSRRATALTTRASYTPTPATERVISIASYALPFFNSLQYGRFLFAQYPRLGLLFEPIFPILNLYRSVPYASFVAFFGLYLGVVRNTSFSRYVRFNAMQAVTLDVLLAVPVLLTRILDPGQGGGFGMKAMMWGHTGVFVFSFMCFVYGVVSSLLGKTPYIPFVADAAGRQL</sequence>